<feature type="chain" id="PRO_0000003355" description="DNA helicase/primase">
    <location>
        <begin position="1"/>
        <end position="566"/>
    </location>
</feature>
<feature type="domain" description="Toprim" evidence="2">
    <location>
        <begin position="151"/>
        <end position="238"/>
    </location>
</feature>
<feature type="domain" description="SF4 helicase" evidence="1">
    <location>
        <begin position="281"/>
        <end position="548"/>
    </location>
</feature>
<feature type="zinc finger region" description="C4-like; zinc ribbon fold" evidence="1 4 8 31">
    <location>
        <begin position="17"/>
        <end position="39"/>
    </location>
</feature>
<feature type="region of interest" description="Disordered" evidence="3">
    <location>
        <begin position="543"/>
        <end position="566"/>
    </location>
</feature>
<feature type="region of interest" description="Binding to viral DNA polymerase" evidence="1 17">
    <location>
        <begin position="550"/>
        <end position="566"/>
    </location>
</feature>
<feature type="binding site" evidence="1 8">
    <location>
        <position position="17"/>
    </location>
    <ligand>
        <name>Zn(2+)</name>
        <dbReference type="ChEBI" id="CHEBI:29105"/>
    </ligand>
</feature>
<feature type="binding site" evidence="1 8">
    <location>
        <position position="20"/>
    </location>
    <ligand>
        <name>Zn(2+)</name>
        <dbReference type="ChEBI" id="CHEBI:29105"/>
    </ligand>
</feature>
<feature type="binding site" evidence="1 8">
    <location>
        <position position="36"/>
    </location>
    <ligand>
        <name>Zn(2+)</name>
        <dbReference type="ChEBI" id="CHEBI:29105"/>
    </ligand>
</feature>
<feature type="binding site" evidence="1 8">
    <location>
        <position position="39"/>
    </location>
    <ligand>
        <name>Zn(2+)</name>
        <dbReference type="ChEBI" id="CHEBI:29105"/>
    </ligand>
</feature>
<feature type="binding site" evidence="1 30">
    <location>
        <position position="157"/>
    </location>
    <ligand>
        <name>Mg(2+)</name>
        <dbReference type="ChEBI" id="CHEBI:18420"/>
        <label>1</label>
        <note>catalytic</note>
    </ligand>
</feature>
<feature type="binding site" evidence="1 30">
    <location>
        <position position="207"/>
    </location>
    <ligand>
        <name>Mg(2+)</name>
        <dbReference type="ChEBI" id="CHEBI:18420"/>
        <label>1</label>
        <note>catalytic</note>
    </ligand>
</feature>
<feature type="binding site" evidence="1 8">
    <location>
        <position position="237"/>
    </location>
    <ligand>
        <name>Mg(2+)</name>
        <dbReference type="ChEBI" id="CHEBI:18420"/>
        <label>2</label>
    </ligand>
</feature>
<feature type="binding site" evidence="1">
    <location>
        <begin position="312"/>
        <end position="319"/>
    </location>
    <ligand>
        <name>ATP</name>
        <dbReference type="ChEBI" id="CHEBI:30616"/>
    </ligand>
</feature>
<feature type="site" description="dTTP/dATP binding" evidence="1 29">
    <location>
        <position position="361"/>
    </location>
</feature>
<feature type="site" description="dTTP/dATP binding" evidence="1 28">
    <location>
        <position position="465"/>
    </location>
</feature>
<feature type="site" description="dTTP/dATP binding" evidence="1 28 29">
    <location>
        <position position="504"/>
    </location>
</feature>
<feature type="site" description="dTTP/dATP binding" evidence="1 28 29">
    <location>
        <position position="522"/>
    </location>
</feature>
<feature type="site" description="dTTP/dATP binding" evidence="1 28 29">
    <location>
        <position position="535"/>
    </location>
</feature>
<feature type="splice variant" id="VSP_018683" description="In isoform 4B." evidence="27">
    <location>
        <begin position="1"/>
        <end position="63"/>
    </location>
</feature>
<feature type="strand" evidence="52">
    <location>
        <begin position="11"/>
        <end position="15"/>
    </location>
</feature>
<feature type="strand" evidence="52">
    <location>
        <begin position="18"/>
        <end position="20"/>
    </location>
</feature>
<feature type="strand" evidence="52">
    <location>
        <begin position="26"/>
        <end position="29"/>
    </location>
</feature>
<feature type="strand" evidence="52">
    <location>
        <begin position="34"/>
        <end position="36"/>
    </location>
</feature>
<feature type="turn" evidence="52">
    <location>
        <begin position="37"/>
        <end position="39"/>
    </location>
</feature>
<feature type="helix" evidence="52">
    <location>
        <begin position="50"/>
        <end position="54"/>
    </location>
</feature>
<feature type="helix" evidence="52">
    <location>
        <begin position="71"/>
        <end position="73"/>
    </location>
</feature>
<feature type="helix" evidence="52">
    <location>
        <begin position="82"/>
        <end position="84"/>
    </location>
</feature>
<feature type="helix" evidence="52">
    <location>
        <begin position="88"/>
        <end position="94"/>
    </location>
</feature>
<feature type="strand" evidence="52">
    <location>
        <begin position="96"/>
        <end position="101"/>
    </location>
</feature>
<feature type="strand" evidence="52">
    <location>
        <begin position="104"/>
        <end position="112"/>
    </location>
</feature>
<feature type="strand" evidence="52">
    <location>
        <begin position="118"/>
        <end position="124"/>
    </location>
</feature>
<feature type="turn" evidence="53">
    <location>
        <begin position="126"/>
        <end position="128"/>
    </location>
</feature>
<feature type="strand" evidence="52">
    <location>
        <begin position="131"/>
        <end position="134"/>
    </location>
</feature>
<feature type="helix" evidence="52">
    <location>
        <begin position="144"/>
        <end position="146"/>
    </location>
</feature>
<feature type="strand" evidence="52">
    <location>
        <begin position="154"/>
        <end position="158"/>
    </location>
</feature>
<feature type="helix" evidence="52">
    <location>
        <begin position="159"/>
        <end position="169"/>
    </location>
</feature>
<feature type="turn" evidence="52">
    <location>
        <begin position="179"/>
        <end position="184"/>
    </location>
</feature>
<feature type="helix" evidence="52">
    <location>
        <begin position="185"/>
        <end position="191"/>
    </location>
</feature>
<feature type="helix" evidence="52">
    <location>
        <begin position="193"/>
        <end position="196"/>
    </location>
</feature>
<feature type="strand" evidence="52">
    <location>
        <begin position="202"/>
        <end position="205"/>
    </location>
</feature>
<feature type="helix" evidence="52">
    <location>
        <begin position="210"/>
        <end position="222"/>
    </location>
</feature>
<feature type="turn" evidence="52">
    <location>
        <begin position="225"/>
        <end position="227"/>
    </location>
</feature>
<feature type="strand" evidence="52">
    <location>
        <begin position="228"/>
        <end position="230"/>
    </location>
</feature>
<feature type="strand" evidence="52">
    <location>
        <begin position="234"/>
        <end position="237"/>
    </location>
</feature>
<feature type="helix" evidence="52">
    <location>
        <begin position="238"/>
        <end position="242"/>
    </location>
</feature>
<feature type="turn" evidence="52">
    <location>
        <begin position="243"/>
        <end position="246"/>
    </location>
</feature>
<feature type="helix" evidence="52">
    <location>
        <begin position="247"/>
        <end position="254"/>
    </location>
</feature>
<feature type="strand" evidence="53">
    <location>
        <begin position="263"/>
        <end position="267"/>
    </location>
</feature>
<feature type="helix" evidence="51">
    <location>
        <begin position="268"/>
        <end position="271"/>
    </location>
</feature>
<feature type="helix" evidence="50">
    <location>
        <begin position="272"/>
        <end position="281"/>
    </location>
</feature>
<feature type="helix" evidence="50">
    <location>
        <begin position="295"/>
        <end position="299"/>
    </location>
</feature>
<feature type="strand" evidence="50">
    <location>
        <begin position="307"/>
        <end position="313"/>
    </location>
</feature>
<feature type="helix" evidence="50">
    <location>
        <begin position="318"/>
        <end position="331"/>
    </location>
</feature>
<feature type="strand" evidence="50">
    <location>
        <begin position="337"/>
        <end position="344"/>
    </location>
</feature>
<feature type="helix" evidence="50">
    <location>
        <begin position="346"/>
        <end position="357"/>
    </location>
</feature>
<feature type="helix" evidence="50">
    <location>
        <begin position="362"/>
        <end position="364"/>
    </location>
</feature>
<feature type="helix" evidence="50">
    <location>
        <begin position="366"/>
        <end position="375"/>
    </location>
</feature>
<feature type="helix" evidence="50">
    <location>
        <begin position="377"/>
        <end position="386"/>
    </location>
</feature>
<feature type="strand" evidence="50">
    <location>
        <begin position="387"/>
        <end position="389"/>
    </location>
</feature>
<feature type="strand" evidence="50">
    <location>
        <begin position="391"/>
        <end position="394"/>
    </location>
</feature>
<feature type="helix" evidence="50">
    <location>
        <begin position="402"/>
        <end position="414"/>
    </location>
</feature>
<feature type="strand" evidence="50">
    <location>
        <begin position="419"/>
        <end position="426"/>
    </location>
</feature>
<feature type="helix" evidence="50">
    <location>
        <begin position="440"/>
        <end position="456"/>
    </location>
</feature>
<feature type="strand" evidence="50">
    <location>
        <begin position="459"/>
        <end position="465"/>
    </location>
</feature>
<feature type="strand" evidence="51">
    <location>
        <begin position="471"/>
        <end position="473"/>
    </location>
</feature>
<feature type="turn" evidence="54">
    <location>
        <begin position="475"/>
        <end position="478"/>
    </location>
</feature>
<feature type="helix" evidence="51">
    <location>
        <begin position="483"/>
        <end position="485"/>
    </location>
</feature>
<feature type="strand" evidence="51">
    <location>
        <begin position="486"/>
        <end position="491"/>
    </location>
</feature>
<feature type="helix" evidence="50">
    <location>
        <begin position="492"/>
        <end position="495"/>
    </location>
</feature>
<feature type="strand" evidence="50">
    <location>
        <begin position="497"/>
        <end position="504"/>
    </location>
</feature>
<feature type="strand" evidence="53">
    <location>
        <begin position="506"/>
        <end position="509"/>
    </location>
</feature>
<feature type="strand" evidence="50">
    <location>
        <begin position="514"/>
        <end position="521"/>
    </location>
</feature>
<feature type="turn" evidence="50">
    <location>
        <begin position="522"/>
        <end position="524"/>
    </location>
</feature>
<feature type="strand" evidence="50">
    <location>
        <begin position="528"/>
        <end position="535"/>
    </location>
</feature>
<feature type="turn" evidence="50">
    <location>
        <begin position="537"/>
        <end position="539"/>
    </location>
</feature>
<feature type="strand" evidence="50">
    <location>
        <begin position="542"/>
        <end position="544"/>
    </location>
</feature>
<accession>P03692</accession>
<proteinExistence type="evidence at protein level"/>
<organism>
    <name type="scientific">Escherichia phage T7</name>
    <name type="common">Bacteriophage T7</name>
    <dbReference type="NCBI Taxonomy" id="10760"/>
    <lineage>
        <taxon>Viruses</taxon>
        <taxon>Duplodnaviria</taxon>
        <taxon>Heunggongvirae</taxon>
        <taxon>Uroviricota</taxon>
        <taxon>Caudoviricetes</taxon>
        <taxon>Autographiviridae</taxon>
        <taxon>Studiervirinae</taxon>
        <taxon>Teseptimavirus</taxon>
        <taxon>Teseptimavirus T7</taxon>
    </lineage>
</organism>
<comment type="function">
    <text evidence="1 13 14 15 19 20 21 23 24 25">ATP-dependent DNA helicase and primase essential for viral DNA replication and recombination (PubMed:21606333, PubMed:22977246, PubMed:32009150). The helicase moves 5' -&gt; 3' on the lagging strand template, unwinding the DNA duplex ahead of the leading strand polymerase at the replication fork and generating ssDNA for both leading and lagging strand synthesis (PubMed:21606333, PubMed:22977246, PubMed:32009150). ATP or dTTP hydrolysis propels each helicase domain to translocate 2 nt per step sequentially along DNA (PubMed:17604719, PubMed:30679383). Mediates strand transfer when a joint molecule is available and participates in recombinational DNA repair through its role in strand exchange (PubMed:8617248, PubMed:9096333). Primase activity synthesizes short RNA primers at the sequence 5'-GTC-3' on the lagging strand that the polymerase elongates using dNTPs and providing the primase is still present (PubMed:6454135, PubMed:9139692).</text>
</comment>
<comment type="catalytic activity">
    <reaction evidence="1 18 26">
        <text>ATP + H2O = ADP + phosphate + H(+)</text>
        <dbReference type="Rhea" id="RHEA:13065"/>
        <dbReference type="ChEBI" id="CHEBI:15377"/>
        <dbReference type="ChEBI" id="CHEBI:15378"/>
        <dbReference type="ChEBI" id="CHEBI:30616"/>
        <dbReference type="ChEBI" id="CHEBI:43474"/>
        <dbReference type="ChEBI" id="CHEBI:456216"/>
        <dbReference type="EC" id="3.6.4.12"/>
    </reaction>
</comment>
<comment type="cofactor">
    <cofactor evidence="1 8">
        <name>Mg(2+)</name>
        <dbReference type="ChEBI" id="CHEBI:18420"/>
    </cofactor>
    <text evidence="1 8 19">Binds 2 Mg(2+), one of which is catalytic.</text>
</comment>
<comment type="subunit">
    <text evidence="1 5 6 7 9 10 11 12 15 16 17 19">Homohexamer (PubMed:10535735, PubMed:10880454, PubMed:10892646, PubMed:14636571, PubMed:16777142, PubMed:30679383). Assembles as a hexamer onto linear or circular ssDNA in the presence of ATP or dTTP (PubMed:10880454). Present in a mixture of heptamers and hexamers in the absence of DNA (PubMed:14636571, PubMed:16777142). Interacts (via C-terminus) with the viral DNA polymerase that is bound to DNA; this interaction is essential to initiate leading-strand DNA synthesis (PubMed:15795374, PubMed:22977246, PubMed:23675753, PubMed:26620561). The priming complex consists of 2 DNA polymerases and 1 helicase-primase hexamer that assemble on the DNA template (PubMed:23675753). Interacts with the single-stranded DNA-binding protein (PubMed:1634539). Part of the replicase complex that includes the DNA polymerase, thioredoxin, the primase/helicase and the single-stranded DNA binding protein (PubMed:22977246).</text>
</comment>
<comment type="interaction">
    <interactant intactId="EBI-8664802">
        <id>P03692</id>
    </interactant>
    <interactant intactId="EBI-8664802">
        <id>P03692</id>
        <label>4</label>
    </interactant>
    <organismsDiffer>false</organismsDiffer>
    <experiments>2</experiments>
</comment>
<comment type="interaction">
    <interactant intactId="EBI-8664802">
        <id>P03692</id>
    </interactant>
    <interactant intactId="EBI-8664634">
        <id>P00581</id>
        <label>5</label>
    </interactant>
    <organismsDiffer>false</organismsDiffer>
    <experiments>2</experiments>
</comment>
<comment type="alternative products">
    <event type="alternative initiation"/>
    <isoform>
        <id>P03692-1</id>
        <name>4A</name>
        <name>63-kDa protein</name>
        <sequence type="displayed"/>
    </isoform>
    <isoform>
        <id>P03692-2</id>
        <name>4B</name>
        <name>56-kDa protein</name>
        <sequence type="described" ref="VSP_018683"/>
    </isoform>
    <text evidence="18 22">Isoform 4A contains the primase/helicase region, whereas isoform 4B contains only the helicase region (PubMed:7310871). Isoform 4A and 4B are present in a molar ratio of 1:8 (PubMed:2829184).</text>
</comment>
<comment type="domain">
    <text evidence="1 4 8 18 19 26">The N-terminus zinc finger domain is essential for delivering the primed DNA template to the DNA polymerase (PubMed:10200256, PubMed:12769857). The central core domain contains the primase activity (PubMed:2829184). The C-terminus region is responsible for the helicase activity and binds 1 Mg(2+)-dTTP (PubMed:2829184, PubMed:30679383, PubMed:9185573).</text>
</comment>
<comment type="similarity">
    <text evidence="1">Belongs to the Teseptimavirus DNA helicase/primase family.</text>
</comment>
<evidence type="ECO:0000255" key="1">
    <source>
        <dbReference type="HAMAP-Rule" id="MF_04154"/>
    </source>
</evidence>
<evidence type="ECO:0000255" key="2">
    <source>
        <dbReference type="PROSITE-ProRule" id="PRU00995"/>
    </source>
</evidence>
<evidence type="ECO:0000256" key="3">
    <source>
        <dbReference type="SAM" id="MobiDB-lite"/>
    </source>
</evidence>
<evidence type="ECO:0000269" key="4">
    <source>
    </source>
</evidence>
<evidence type="ECO:0000269" key="5">
    <source>
    </source>
</evidence>
<evidence type="ECO:0000269" key="6">
    <source>
    </source>
</evidence>
<evidence type="ECO:0000269" key="7">
    <source>
    </source>
</evidence>
<evidence type="ECO:0000269" key="8">
    <source>
    </source>
</evidence>
<evidence type="ECO:0000269" key="9">
    <source>
    </source>
</evidence>
<evidence type="ECO:0000269" key="10">
    <source>
    </source>
</evidence>
<evidence type="ECO:0000269" key="11">
    <source>
    </source>
</evidence>
<evidence type="ECO:0000269" key="12">
    <source>
    </source>
</evidence>
<evidence type="ECO:0000269" key="13">
    <source>
    </source>
</evidence>
<evidence type="ECO:0000269" key="14">
    <source>
    </source>
</evidence>
<evidence type="ECO:0000269" key="15">
    <source>
    </source>
</evidence>
<evidence type="ECO:0000269" key="16">
    <source>
    </source>
</evidence>
<evidence type="ECO:0000269" key="17">
    <source>
    </source>
</evidence>
<evidence type="ECO:0000269" key="18">
    <source>
    </source>
</evidence>
<evidence type="ECO:0000269" key="19">
    <source>
    </source>
</evidence>
<evidence type="ECO:0000269" key="20">
    <source>
    </source>
</evidence>
<evidence type="ECO:0000269" key="21">
    <source>
    </source>
</evidence>
<evidence type="ECO:0000269" key="22">
    <source>
    </source>
</evidence>
<evidence type="ECO:0000269" key="23">
    <source>
    </source>
</evidence>
<evidence type="ECO:0000269" key="24">
    <source>
    </source>
</evidence>
<evidence type="ECO:0000269" key="25">
    <source>
    </source>
</evidence>
<evidence type="ECO:0000269" key="26">
    <source>
    </source>
</evidence>
<evidence type="ECO:0000305" key="27"/>
<evidence type="ECO:0000305" key="28">
    <source>
    </source>
</evidence>
<evidence type="ECO:0000305" key="29">
    <source>
    </source>
</evidence>
<evidence type="ECO:0000305" key="30">
    <source>
    </source>
</evidence>
<evidence type="ECO:0000305" key="31">
    <source>
    </source>
</evidence>
<evidence type="ECO:0007744" key="32">
    <source>
        <dbReference type="PDB" id="1CR0"/>
    </source>
</evidence>
<evidence type="ECO:0007744" key="33">
    <source>
        <dbReference type="PDB" id="1CR1"/>
    </source>
</evidence>
<evidence type="ECO:0007744" key="34">
    <source>
        <dbReference type="PDB" id="1CR2"/>
    </source>
</evidence>
<evidence type="ECO:0007744" key="35">
    <source>
        <dbReference type="PDB" id="1CR4"/>
    </source>
</evidence>
<evidence type="ECO:0007744" key="36">
    <source>
        <dbReference type="PDB" id="1E0J"/>
    </source>
</evidence>
<evidence type="ECO:0007744" key="37">
    <source>
        <dbReference type="PDB" id="1E0K"/>
    </source>
</evidence>
<evidence type="ECO:0007744" key="38">
    <source>
        <dbReference type="PDB" id="1NUI"/>
    </source>
</evidence>
<evidence type="ECO:0007744" key="39">
    <source>
        <dbReference type="PDB" id="1Q57"/>
    </source>
</evidence>
<evidence type="ECO:0007744" key="40">
    <source>
        <dbReference type="PDB" id="5IKN"/>
    </source>
</evidence>
<evidence type="ECO:0007744" key="41">
    <source>
        <dbReference type="PDB" id="6N7I"/>
    </source>
</evidence>
<evidence type="ECO:0007744" key="42">
    <source>
        <dbReference type="PDB" id="6N7N"/>
    </source>
</evidence>
<evidence type="ECO:0007744" key="43">
    <source>
        <dbReference type="PDB" id="6N7S"/>
    </source>
</evidence>
<evidence type="ECO:0007744" key="44">
    <source>
        <dbReference type="PDB" id="6N7T"/>
    </source>
</evidence>
<evidence type="ECO:0007744" key="45">
    <source>
        <dbReference type="PDB" id="6N7V"/>
    </source>
</evidence>
<evidence type="ECO:0007744" key="46">
    <source>
        <dbReference type="PDB" id="6N9U"/>
    </source>
</evidence>
<evidence type="ECO:0007744" key="47">
    <source>
        <dbReference type="PDB" id="6N9V"/>
    </source>
</evidence>
<evidence type="ECO:0007744" key="48">
    <source>
        <dbReference type="PDB" id="6N9W"/>
    </source>
</evidence>
<evidence type="ECO:0007744" key="49">
    <source>
        <dbReference type="PDB" id="6N9X"/>
    </source>
</evidence>
<evidence type="ECO:0007829" key="50">
    <source>
        <dbReference type="PDB" id="1CR0"/>
    </source>
</evidence>
<evidence type="ECO:0007829" key="51">
    <source>
        <dbReference type="PDB" id="1E0J"/>
    </source>
</evidence>
<evidence type="ECO:0007829" key="52">
    <source>
        <dbReference type="PDB" id="1NUI"/>
    </source>
</evidence>
<evidence type="ECO:0007829" key="53">
    <source>
        <dbReference type="PDB" id="1Q57"/>
    </source>
</evidence>
<evidence type="ECO:0007829" key="54">
    <source>
        <dbReference type="PDB" id="6N7I"/>
    </source>
</evidence>
<protein>
    <recommendedName>
        <fullName evidence="1">DNA helicase/primase</fullName>
        <ecNumber evidence="1 18">2.7.7.-</ecNumber>
        <ecNumber evidence="1 18 26">3.6.4.12</ecNumber>
    </recommendedName>
    <alternativeName>
        <fullName evidence="1">Gene product 4</fullName>
        <shortName evidence="1">Gp4</shortName>
    </alternativeName>
</protein>
<dbReference type="EC" id="2.7.7.-" evidence="1 18"/>
<dbReference type="EC" id="3.6.4.12" evidence="1 18 26"/>
<dbReference type="EMBL" id="V01127">
    <property type="protein sequence ID" value="CAA24348.1"/>
    <property type="molecule type" value="Genomic_DNA"/>
</dbReference>
<dbReference type="EMBL" id="V01146">
    <property type="protein sequence ID" value="CAA24405.1"/>
    <property type="molecule type" value="Genomic_DNA"/>
</dbReference>
<dbReference type="EMBL" id="V01146">
    <property type="protein sequence ID" value="CAA24407.1"/>
    <property type="molecule type" value="Genomic_DNA"/>
</dbReference>
<dbReference type="PIR" id="A04314">
    <property type="entry name" value="YDBPA7"/>
</dbReference>
<dbReference type="RefSeq" id="NP_041975.1">
    <molecule id="P03692-1"/>
    <property type="nucleotide sequence ID" value="NC_001604.1"/>
</dbReference>
<dbReference type="RefSeq" id="NP_041977.1">
    <molecule id="P03692-2"/>
    <property type="nucleotide sequence ID" value="NC_001604.1"/>
</dbReference>
<dbReference type="PDB" id="1CR0">
    <property type="method" value="X-ray"/>
    <property type="resolution" value="2.30 A"/>
    <property type="chains" value="A=271-566"/>
</dbReference>
<dbReference type="PDB" id="1CR1">
    <property type="method" value="X-ray"/>
    <property type="resolution" value="2.30 A"/>
    <property type="chains" value="A=271-566"/>
</dbReference>
<dbReference type="PDB" id="1CR2">
    <property type="method" value="X-ray"/>
    <property type="resolution" value="2.30 A"/>
    <property type="chains" value="A=271-566"/>
</dbReference>
<dbReference type="PDB" id="1CR4">
    <property type="method" value="X-ray"/>
    <property type="resolution" value="2.50 A"/>
    <property type="chains" value="A=271-566"/>
</dbReference>
<dbReference type="PDB" id="1E0J">
    <property type="method" value="X-ray"/>
    <property type="resolution" value="3.00 A"/>
    <property type="chains" value="A/B/C/D/E/F=261-549"/>
</dbReference>
<dbReference type="PDB" id="1E0K">
    <property type="method" value="X-ray"/>
    <property type="resolution" value="3.30 A"/>
    <property type="chains" value="A/B/C/D/E/F=261-549"/>
</dbReference>
<dbReference type="PDB" id="1NUI">
    <property type="method" value="X-ray"/>
    <property type="resolution" value="2.90 A"/>
    <property type="chains" value="A/B=1-255"/>
</dbReference>
<dbReference type="PDB" id="1Q57">
    <property type="method" value="X-ray"/>
    <property type="resolution" value="3.45 A"/>
    <property type="chains" value="A/B/C/D/E/F/G=64-566"/>
</dbReference>
<dbReference type="PDB" id="5IKN">
    <property type="method" value="X-ray"/>
    <property type="resolution" value="4.80 A"/>
    <property type="chains" value="D/E/F/G/H/I/J=64-549"/>
</dbReference>
<dbReference type="PDB" id="6N7I">
    <property type="method" value="EM"/>
    <property type="resolution" value="3.20 A"/>
    <property type="chains" value="A/B/C/D/E/F=1-566"/>
</dbReference>
<dbReference type="PDB" id="6N7N">
    <property type="method" value="EM"/>
    <property type="resolution" value="3.50 A"/>
    <property type="chains" value="A/B/C/D/E/F=1-566"/>
</dbReference>
<dbReference type="PDB" id="6N7S">
    <property type="method" value="EM"/>
    <property type="resolution" value="4.60 A"/>
    <property type="chains" value="A/B/C/D/E/F=1-566"/>
</dbReference>
<dbReference type="PDB" id="6N7T">
    <property type="method" value="EM"/>
    <property type="resolution" value="3.90 A"/>
    <property type="chains" value="A/B/C/D/E/F=1-566"/>
</dbReference>
<dbReference type="PDB" id="6N7V">
    <property type="method" value="EM"/>
    <property type="resolution" value="3.80 A"/>
    <property type="chains" value="A/B/C/D/E/F=1-566"/>
</dbReference>
<dbReference type="PDB" id="6N9U">
    <property type="method" value="EM"/>
    <property type="resolution" value="3.70 A"/>
    <property type="chains" value="E/F=1-566"/>
</dbReference>
<dbReference type="PDB" id="6N9V">
    <property type="method" value="EM"/>
    <property type="resolution" value="4.00 A"/>
    <property type="chains" value="A/B/C/D/E/F=1-566"/>
</dbReference>
<dbReference type="PDB" id="6N9W">
    <property type="method" value="EM"/>
    <property type="resolution" value="4.00 A"/>
    <property type="chains" value="A/B/C/D/E/F=1-566"/>
</dbReference>
<dbReference type="PDB" id="6N9X">
    <property type="method" value="EM"/>
    <property type="resolution" value="4.10 A"/>
    <property type="chains" value="A/B/C/D/E/F=1-566"/>
</dbReference>
<dbReference type="PDBsum" id="1CR0"/>
<dbReference type="PDBsum" id="1CR1"/>
<dbReference type="PDBsum" id="1CR2"/>
<dbReference type="PDBsum" id="1CR4"/>
<dbReference type="PDBsum" id="1E0J"/>
<dbReference type="PDBsum" id="1E0K"/>
<dbReference type="PDBsum" id="1NUI"/>
<dbReference type="PDBsum" id="1Q57"/>
<dbReference type="PDBsum" id="5IKN"/>
<dbReference type="PDBsum" id="6N7I"/>
<dbReference type="PDBsum" id="6N7N"/>
<dbReference type="PDBsum" id="6N7S"/>
<dbReference type="PDBsum" id="6N7T"/>
<dbReference type="PDBsum" id="6N7V"/>
<dbReference type="PDBsum" id="6N9U"/>
<dbReference type="PDBsum" id="6N9V"/>
<dbReference type="PDBsum" id="6N9W"/>
<dbReference type="PDBsum" id="6N9X"/>
<dbReference type="EMDB" id="EMD-0357"/>
<dbReference type="EMDB" id="EMD-0359"/>
<dbReference type="EMDB" id="EMD-0362"/>
<dbReference type="EMDB" id="EMD-0363"/>
<dbReference type="EMDB" id="EMD-0364"/>
<dbReference type="EMDB" id="EMD-0379"/>
<dbReference type="EMDB" id="EMD-0380"/>
<dbReference type="EMDB" id="EMD-0381"/>
<dbReference type="EMDB" id="EMD-0382"/>
<dbReference type="EMDB" id="EMD-0386"/>
<dbReference type="EMDB" id="EMD-0387"/>
<dbReference type="EMDB" id="EMD-0388"/>
<dbReference type="EMDB" id="EMD-0389"/>
<dbReference type="EMDB" id="EMD-0390"/>
<dbReference type="EMDB" id="EMD-0391"/>
<dbReference type="EMDB" id="EMD-0392"/>
<dbReference type="EMDB" id="EMD-0393"/>
<dbReference type="EMDB" id="EMD-0394"/>
<dbReference type="EMDB" id="EMD-0395"/>
<dbReference type="SMR" id="P03692"/>
<dbReference type="IntAct" id="P03692">
    <property type="interactions" value="1"/>
</dbReference>
<dbReference type="MINT" id="P03692"/>
<dbReference type="DrugBank" id="DB03222">
    <property type="generic name" value="dATP"/>
</dbReference>
<dbReference type="DrugBank" id="DB02452">
    <property type="generic name" value="Thymidine 5'-triphosphate"/>
</dbReference>
<dbReference type="KEGG" id="vg:1261046"/>
<dbReference type="KEGG" id="vg:1261048"/>
<dbReference type="OrthoDB" id="615at10239"/>
<dbReference type="EvolutionaryTrace" id="P03692"/>
<dbReference type="Proteomes" id="UP000000840">
    <property type="component" value="Genome"/>
</dbReference>
<dbReference type="GO" id="GO:0043139">
    <property type="term" value="F:5'-3' DNA helicase activity"/>
    <property type="evidence" value="ECO:0007669"/>
    <property type="project" value="InterPro"/>
</dbReference>
<dbReference type="GO" id="GO:0005524">
    <property type="term" value="F:ATP binding"/>
    <property type="evidence" value="ECO:0007669"/>
    <property type="project" value="UniProtKB-UniRule"/>
</dbReference>
<dbReference type="GO" id="GO:0016887">
    <property type="term" value="F:ATP hydrolysis activity"/>
    <property type="evidence" value="ECO:0007669"/>
    <property type="project" value="RHEA"/>
</dbReference>
<dbReference type="GO" id="GO:0003678">
    <property type="term" value="F:DNA helicase activity"/>
    <property type="evidence" value="ECO:0000314"/>
    <property type="project" value="UniProtKB"/>
</dbReference>
<dbReference type="GO" id="GO:0003899">
    <property type="term" value="F:DNA-directed RNA polymerase activity"/>
    <property type="evidence" value="ECO:0000314"/>
    <property type="project" value="CACAO"/>
</dbReference>
<dbReference type="GO" id="GO:0042802">
    <property type="term" value="F:identical protein binding"/>
    <property type="evidence" value="ECO:0000353"/>
    <property type="project" value="IntAct"/>
</dbReference>
<dbReference type="GO" id="GO:0003697">
    <property type="term" value="F:single-stranded DNA binding"/>
    <property type="evidence" value="ECO:0007669"/>
    <property type="project" value="InterPro"/>
</dbReference>
<dbReference type="GO" id="GO:0008270">
    <property type="term" value="F:zinc ion binding"/>
    <property type="evidence" value="ECO:0007669"/>
    <property type="project" value="UniProtKB-UniRule"/>
</dbReference>
<dbReference type="GO" id="GO:0006269">
    <property type="term" value="P:DNA replication, synthesis of primer"/>
    <property type="evidence" value="ECO:0007669"/>
    <property type="project" value="UniProtKB-KW"/>
</dbReference>
<dbReference type="GO" id="GO:0039693">
    <property type="term" value="P:viral DNA genome replication"/>
    <property type="evidence" value="ECO:0007669"/>
    <property type="project" value="UniProtKB-UniRule"/>
</dbReference>
<dbReference type="CDD" id="cd19483">
    <property type="entry name" value="RecA-like_Gp4D_helicase"/>
    <property type="match status" value="1"/>
</dbReference>
<dbReference type="CDD" id="cd01029">
    <property type="entry name" value="TOPRIM_primases"/>
    <property type="match status" value="1"/>
</dbReference>
<dbReference type="Gene3D" id="2.20.25.10">
    <property type="match status" value="1"/>
</dbReference>
<dbReference type="Gene3D" id="2.20.25.180">
    <property type="match status" value="1"/>
</dbReference>
<dbReference type="Gene3D" id="3.40.1360.10">
    <property type="match status" value="1"/>
</dbReference>
<dbReference type="Gene3D" id="3.40.50.300">
    <property type="entry name" value="P-loop containing nucleotide triphosphate hydrolases"/>
    <property type="match status" value="1"/>
</dbReference>
<dbReference type="HAMAP" id="MF_04154">
    <property type="entry name" value="Helic_Prim_T7"/>
    <property type="match status" value="1"/>
</dbReference>
<dbReference type="InterPro" id="IPR007694">
    <property type="entry name" value="DNA_helicase_DnaB-like_C"/>
</dbReference>
<dbReference type="InterPro" id="IPR048774">
    <property type="entry name" value="Helic-prim_T7_N"/>
</dbReference>
<dbReference type="InterPro" id="IPR046394">
    <property type="entry name" value="Helic_Prim_T7"/>
</dbReference>
<dbReference type="InterPro" id="IPR027417">
    <property type="entry name" value="P-loop_NTPase"/>
</dbReference>
<dbReference type="InterPro" id="IPR013237">
    <property type="entry name" value="Phage_T7_Gp4_N"/>
</dbReference>
<dbReference type="InterPro" id="IPR034154">
    <property type="entry name" value="TOPRIM_DnaG/twinkle"/>
</dbReference>
<dbReference type="InterPro" id="IPR006171">
    <property type="entry name" value="TOPRIM_dom"/>
</dbReference>
<dbReference type="InterPro" id="IPR027032">
    <property type="entry name" value="Twinkle-like"/>
</dbReference>
<dbReference type="PANTHER" id="PTHR12873">
    <property type="entry name" value="T7-LIKE MITOCHONDRIAL DNA HELICASE"/>
    <property type="match status" value="1"/>
</dbReference>
<dbReference type="PANTHER" id="PTHR12873:SF0">
    <property type="entry name" value="TWINKLE MTDNA HELICASE"/>
    <property type="match status" value="1"/>
</dbReference>
<dbReference type="Pfam" id="PF03796">
    <property type="entry name" value="DnaB_C"/>
    <property type="match status" value="1"/>
</dbReference>
<dbReference type="Pfam" id="PF21268">
    <property type="entry name" value="Helic-prim_T7_N"/>
    <property type="match status" value="1"/>
</dbReference>
<dbReference type="Pfam" id="PF13155">
    <property type="entry name" value="Toprim_2"/>
    <property type="match status" value="1"/>
</dbReference>
<dbReference type="Pfam" id="PF08273">
    <property type="entry name" value="Zn_Ribbon_Prim"/>
    <property type="match status" value="1"/>
</dbReference>
<dbReference type="SMART" id="SM00778">
    <property type="entry name" value="Prim_Zn_Ribbon"/>
    <property type="match status" value="1"/>
</dbReference>
<dbReference type="SMART" id="SM00493">
    <property type="entry name" value="TOPRIM"/>
    <property type="match status" value="1"/>
</dbReference>
<dbReference type="SUPFAM" id="SSF56731">
    <property type="entry name" value="DNA primase core"/>
    <property type="match status" value="1"/>
</dbReference>
<dbReference type="SUPFAM" id="SSF52540">
    <property type="entry name" value="P-loop containing nucleoside triphosphate hydrolases"/>
    <property type="match status" value="1"/>
</dbReference>
<dbReference type="SUPFAM" id="SSF57783">
    <property type="entry name" value="Zinc beta-ribbon"/>
    <property type="match status" value="1"/>
</dbReference>
<dbReference type="PROSITE" id="PS51199">
    <property type="entry name" value="SF4_HELICASE"/>
    <property type="match status" value="1"/>
</dbReference>
<dbReference type="PROSITE" id="PS50880">
    <property type="entry name" value="TOPRIM"/>
    <property type="match status" value="1"/>
</dbReference>
<reference key="1">
    <citation type="journal article" date="1983" name="J. Mol. Biol.">
        <title>Complete nucleotide sequence of bacteriophage T7 DNA and the locations of T7 genetic elements.</title>
        <authorList>
            <person name="Dunn J.J."/>
            <person name="Studier F.W."/>
        </authorList>
    </citation>
    <scope>NUCLEOTIDE SEQUENCE [LARGE SCALE GENOMIC DNA]</scope>
</reference>
<reference key="2">
    <citation type="journal article" date="1981" name="J. Mol. Biol.">
        <title>Nucleotide sequence from the genetic left end of bacteriophage T7 DNA to the beginning of gene 4.</title>
        <authorList>
            <person name="Dunn J.J."/>
            <person name="Studier F.W."/>
        </authorList>
    </citation>
    <scope>NUCLEOTIDE SEQUENCE [GENOMIC DNA] OF 1-179</scope>
    <scope>ALTERNATIVE INITIATION</scope>
</reference>
<reference key="3">
    <citation type="journal article" date="1981" name="Proc. Natl. Acad. Sci. U.S.A.">
        <title>Template recognition sequence for RNA primer synthesis by gene 4 protein of bacteriophage T7.</title>
        <authorList>
            <person name="Tabor S."/>
            <person name="Richardson C.C."/>
        </authorList>
    </citation>
    <scope>FUNCTION</scope>
</reference>
<reference key="4">
    <citation type="journal article" date="1988" name="Proc. Natl. Acad. Sci. U.S.A.">
        <title>A 7-kDa region of the bacteriophage T7 gene 4 protein is required for primase but not for helicase activity.</title>
        <authorList>
            <person name="Bernstein J.A."/>
            <person name="Richardson C.C."/>
        </authorList>
    </citation>
    <scope>DOMAIN</scope>
    <scope>ALTERNATIVE INITIATION</scope>
    <scope>CATALYTIC ACTIVITY</scope>
</reference>
<reference key="5">
    <citation type="journal article" date="1997" name="Nucleic Acids Res.">
        <title>Characterization and crystallization of the helicase domain of bacteriophage T7 gene 4 protein.</title>
        <authorList>
            <person name="Bird L.E."/>
            <person name="Haekansson K."/>
            <person name="Pan H."/>
            <person name="Wigley D.B."/>
        </authorList>
    </citation>
    <scope>DOMAIN</scope>
    <scope>CATALYTIC ACTIVITY</scope>
</reference>
<reference key="6">
    <citation type="journal article" date="1992" name="J. Biol. Chem.">
        <title>Interactions of gene 2.5 protein and DNA polymerase of bacteriophage T7.</title>
        <authorList>
            <person name="Kim Y.T."/>
            <person name="Tabor S."/>
            <person name="Churchich J.E."/>
            <person name="Richardson C.C."/>
        </authorList>
    </citation>
    <scope>INTERACTION WITH THE SINGLE-STRANDED DNA-BINDING PROTEIN</scope>
</reference>
<reference key="7">
    <citation type="journal article" date="1996" name="EMBO J.">
        <title>Single-stranded DNA binding protein and DNA helicase of bacteriophage T7 mediate homologous DNA strand exchange.</title>
        <authorList>
            <person name="Kong D."/>
            <person name="Richardson C.C."/>
        </authorList>
    </citation>
    <scope>FUNCTION</scope>
</reference>
<reference key="8">
    <citation type="journal article" date="1997" name="Proc. Natl. Acad. Sci. U.S.A.">
        <title>Gene 4 helicase of bacteriophage T7 mediates strand transfer through pyrimidine dimers, mismatches, and nonhomologous regions.</title>
        <authorList>
            <person name="Kong D."/>
            <person name="Griffith J.D."/>
            <person name="Richardson C.C."/>
        </authorList>
    </citation>
    <scope>FUNCTION</scope>
</reference>
<reference key="9">
    <citation type="journal article" date="1997" name="J. Biol. Chem.">
        <title>Gene 4 DNA primase of bacteriophage T7 mediates the annealing and extension of ribo-oligonucleotides at primase recognition sites.</title>
        <authorList>
            <person name="Kusakabe T."/>
            <person name="Richardson C.C."/>
        </authorList>
    </citation>
    <scope>FUNCTION</scope>
</reference>
<reference key="10">
    <citation type="journal article" date="1999" name="Proc. Natl. Acad. Sci. U.S.A.">
        <title>The Cys4 zinc finger of bacteriophage T7 primase in sequence-specific single-stranded DNA recognition.</title>
        <authorList>
            <person name="Kusakabe T."/>
            <person name="Hine A.V."/>
            <person name="Hyberts S.G."/>
            <person name="Richardson C.C."/>
        </authorList>
    </citation>
    <scope>DOMAIN</scope>
</reference>
<reference key="11">
    <citation type="journal article" date="2000" name="EMBO J.">
        <title>A ring-opening mechanism for DNA binding in the central channel of the T7 helicase-primase protein.</title>
        <authorList>
            <person name="Ahnert P."/>
            <person name="Picha K.M."/>
            <person name="Patel S.S."/>
        </authorList>
    </citation>
    <scope>SUBUNIT</scope>
</reference>
<reference key="12">
    <citation type="journal article" date="2005" name="Proc. Natl. Acad. Sci. U.S.A.">
        <title>A unique loop in T7 DNA polymerase mediates the binding of helicase-primase, DNA binding protein, and processivity factor.</title>
        <authorList>
            <person name="Hamdan S.M."/>
            <person name="Marintcheva B."/>
            <person name="Cook T."/>
            <person name="Lee S.J."/>
            <person name="Tabor S."/>
            <person name="Richardson C.C."/>
        </authorList>
    </citation>
    <scope>INTERACTION WITH THE VIRAL DNA POLYMERASE</scope>
</reference>
<reference key="13">
    <citation type="journal article" date="2006" name="J. Mol. Biol.">
        <title>Oligomeric states of bacteriophage T7 gene 4 primase/helicase.</title>
        <authorList>
            <person name="Crampton D.J."/>
            <person name="Ohi M."/>
            <person name="Qimron U."/>
            <person name="Walz T."/>
            <person name="Richardson C.C."/>
        </authorList>
    </citation>
    <scope>SUBUNIT</scope>
</reference>
<reference key="14">
    <citation type="journal article" date="2007" name="Cell">
        <title>Single-molecule studies reveal dynamics of DNA unwinding by the ring-shaped T7 helicase.</title>
        <authorList>
            <person name="Johnson D.S."/>
            <person name="Bai L."/>
            <person name="Smith B.Y."/>
            <person name="Patel S.S."/>
            <person name="Wang M.D."/>
        </authorList>
    </citation>
    <scope>FUNCTION</scope>
</reference>
<reference key="15">
    <citation type="journal article" date="2011" name="Proc. Natl. Acad. Sci. U.S.A.">
        <title>Helicase-DNA polymerase interaction is critical to initiate leading-strand DNA synthesis.</title>
        <authorList>
            <person name="Zhang H."/>
            <person name="Lee S.J."/>
            <person name="Zhu B."/>
            <person name="Tran N.Q."/>
            <person name="Tabor S."/>
            <person name="Richardson C.C."/>
        </authorList>
    </citation>
    <scope>FUNCTION</scope>
</reference>
<reference key="16">
    <citation type="journal article" date="2012" name="J. Biol. Chem.">
        <title>An interaction between DNA polymerase and helicase is essential for the high processivity of the bacteriophage T7 replisome.</title>
        <authorList>
            <person name="Kulczyk A.W."/>
            <person name="Akabayov B."/>
            <person name="Lee S.J."/>
            <person name="Bostina M."/>
            <person name="Berkowitz S.A."/>
            <person name="Richardson C.C."/>
        </authorList>
    </citation>
    <scope>INTERACTION WITH THE VIRAL DNA POLYMERASE</scope>
    <scope>IDENTIFICATION IN THE REPLICASE COMPLEX</scope>
    <scope>FUNCTION</scope>
</reference>
<reference key="17">
    <citation type="journal article" date="2013" name="Biochemistry">
        <title>Discrete interactions between bacteriophage T7 primase-helicase and DNA polymerase drive the formation of a priming complex containing two copies of DNA polymerase.</title>
        <authorList>
            <person name="Wallen J.R."/>
            <person name="Majka J."/>
            <person name="Ellenberger T."/>
        </authorList>
    </citation>
    <scope>INTERACTION WITH THE VIRAL DNA POLYMERASE</scope>
</reference>
<reference key="18">
    <citation type="journal article" date="2016" name="J. Biol. Chem.">
        <title>Binding Affinities among DNA Helicase-Primase, DNA Polymerase, and Replication Intermediates in the Replisome of Bacteriophage T7.</title>
        <authorList>
            <person name="Zhang H."/>
            <person name="Tang Y."/>
            <person name="Lee S.J."/>
            <person name="Wei Z."/>
            <person name="Cao J."/>
            <person name="Richardson C.C."/>
        </authorList>
    </citation>
    <scope>INTERACTION WITH THE VIRAL DNA POLYMERASE</scope>
</reference>
<reference key="19">
    <citation type="journal article" date="2020" name="Nucleic Acids Res.">
        <title>Dynamic structural insights into the molecular mechanism of DNA unwinding by the bacteriophage T7 helicase.</title>
        <authorList>
            <person name="Ma J.B."/>
            <person name="Chen Z."/>
            <person name="Xu C.H."/>
            <person name="Huang X.Y."/>
            <person name="Jia Q."/>
            <person name="Zou Z.Y."/>
            <person name="Mi C.Y."/>
            <person name="Ma D.F."/>
            <person name="Lu Y."/>
            <person name="Zhang H.D."/>
            <person name="Li M."/>
        </authorList>
    </citation>
    <scope>FUNCTION</scope>
</reference>
<reference evidence="32 33 34 35" key="20">
    <citation type="journal article" date="1999" name="Cell">
        <title>Crystal structure of the helicase domain from the replicative helicase-primase of bacteriophage T7.</title>
        <authorList>
            <person name="Sawaya M.R."/>
            <person name="Guo S."/>
            <person name="Tabor S."/>
            <person name="Richardson C.C."/>
            <person name="Ellenberger T."/>
        </authorList>
    </citation>
    <scope>X-RAY CRYSTALLOGRAPHY (2.3 ANGSTROMS) OF 271-566 IN COMPLEX WITH TTP</scope>
    <scope>SUBUNIT</scope>
</reference>
<reference evidence="36 37" key="21">
    <citation type="journal article" date="2000" name="Cell">
        <title>Crystal structure of T7 gene 4 ring helicase indicates a mechanism for sequential hydrolysis of nucleotides.</title>
        <authorList>
            <person name="Singleton M.R."/>
            <person name="Sawaya M.R."/>
            <person name="Ellenberger T."/>
            <person name="Wigley D.B."/>
        </authorList>
    </citation>
    <scope>X-RAY CRYSTALLOGRAPHY (3.00 ANGSTROMS) OF 261-549 IN COMPLEX WITH ATP ANALOG</scope>
    <scope>SUBUNIT</scope>
    <scope>DNA-BINDING</scope>
</reference>
<reference evidence="38" key="22">
    <citation type="journal article" date="2003" name="Mol. Cell">
        <title>Modular architecture of the bacteriophage T7 primase couples RNA primer synthesis to DNA synthesis.</title>
        <authorList>
            <person name="Kato M."/>
            <person name="Ito T."/>
            <person name="Wagner G."/>
            <person name="Richardson C.C."/>
            <person name="Ellenberger T."/>
        </authorList>
    </citation>
    <scope>X-RAY CRYSTALLOGRAPHY (2.90 ANGSTROMS) OF 1-255 IN COMPLEX WITH MAGNESIUM AND ZINC</scope>
    <scope>COFACTOR</scope>
    <scope>DOMAIN</scope>
</reference>
<reference evidence="39" key="23">
    <citation type="journal article" date="2003" name="Mol. Cell">
        <title>The crystal structure of the bifunctional primase-helicase of bacteriophage T7.</title>
        <authorList>
            <person name="Toth E.A."/>
            <person name="Li Y."/>
            <person name="Sawaya M.R."/>
            <person name="Cheng Y."/>
            <person name="Ellenberger T."/>
        </authorList>
    </citation>
    <scope>X-RAY CRYSTALLOGRAPHY (3.45 ANGSTROMS) OF 64-566</scope>
    <scope>SUBUNIT</scope>
</reference>
<reference evidence="40" key="24">
    <citation type="journal article" date="2017" name="Structure">
        <title>Hybrid Methods Reveal Multiple Flexibly Linked DNA Polymerases within the Bacteriophage T7 Replisome.</title>
        <authorList>
            <person name="Wallen J.R."/>
            <person name="Zhang H."/>
            <person name="Weis C."/>
            <person name="Cui W."/>
            <person name="Foster B.M."/>
            <person name="Ho C.M.W."/>
            <person name="Hammel M."/>
            <person name="Tainer J.A."/>
            <person name="Gross M.L."/>
            <person name="Ellenberger T."/>
        </authorList>
    </citation>
    <scope>X-RAY CRYSTALLOGRAPHY (4.80 ANGSTROMS) OF 64-549</scope>
</reference>
<reference evidence="41 42 43 44 45 46 47 48 49" key="25">
    <citation type="journal article" date="2019" name="Science">
        <title>Structures and operating principles of the replisome.</title>
        <authorList>
            <person name="Gao Y."/>
            <person name="Cui Y."/>
            <person name="Fox T."/>
            <person name="Lin S."/>
            <person name="Wang H."/>
            <person name="de Val N."/>
            <person name="Zhou Z.H."/>
            <person name="Yang W."/>
        </authorList>
    </citation>
    <scope>STRUCTURE BY ELECTRON MICROSCOPY (3.20 ANGSTROMS) IN COMPLEX WITH TTP AND MAGNESIUM</scope>
    <scope>COFACTOR</scope>
    <scope>SUBUNIT</scope>
</reference>
<organismHost>
    <name type="scientific">Escherichia coli</name>
    <dbReference type="NCBI Taxonomy" id="562"/>
</organismHost>
<sequence length="566" mass="62655">MDNSHDSDSVFLYHIPCDNCGSSDGNSLFSDGHTFCYVCEKWTAGNEDTKERASKRKPSGGKPMTYNVWNFGESNGRYSALTARGISKETCQKAGYWIAKVDGVMYQVADYRDQNGNIVSQKVRDKDKNFKTTGSHKSDALFGKHLWNGGKKIVVTEGEIDMLTVMELQDCKYPVVSLGHGASAAKKTCAANYEYFDQFEQIILMFDMDEAGRKAVEEAAQVLPAGKVRVAVLPCKDANECHLNGHDREIMEQVWNAGPWIPDGVVSALSLRERIREHLSSEESVGLLFSGCTGINDKTLGARGGEVIMVTSGSGMGKSTFVRQQALQWGTAMGKKVGLAMLEESVEETAEDLIGLHNRVRLRQSDSLKREIIENGKFDQWFDELFGNDTFHLYDSFAEAETDRLLAKLAYMRSGLGCDVIILDHISIVVSASGESDERKMIDNLMTKLKGFAKSTGVVLVVICHLKNPDKGKAHEEGRPVSITDLRGSGALRQLSDTIIALERNQQGDMPNLVLVRILKCRFTGDTGIAGYMEYNKETGWLEPSSYSGEEESHSESTDWSNDTDF</sequence>
<gene>
    <name type="ordered locus">4</name>
</gene>
<name>HELIC_BPT7</name>
<keyword id="KW-0002">3D-structure</keyword>
<keyword id="KW-0024">Alternative initiation</keyword>
<keyword id="KW-0067">ATP-binding</keyword>
<keyword id="KW-0235">DNA replication</keyword>
<keyword id="KW-0238">DNA-binding</keyword>
<keyword id="KW-0347">Helicase</keyword>
<keyword id="KW-0378">Hydrolase</keyword>
<keyword id="KW-0460">Magnesium</keyword>
<keyword id="KW-0479">Metal-binding</keyword>
<keyword id="KW-0511">Multifunctional enzyme</keyword>
<keyword id="KW-0547">Nucleotide-binding</keyword>
<keyword id="KW-0548">Nucleotidyltransferase</keyword>
<keyword id="KW-0639">Primosome</keyword>
<keyword id="KW-1185">Reference proteome</keyword>
<keyword id="KW-0808">Transferase</keyword>
<keyword id="KW-1194">Viral DNA replication</keyword>
<keyword id="KW-0862">Zinc</keyword>
<keyword id="KW-0863">Zinc-finger</keyword>